<feature type="chain" id="PRO_0000086502" description="3-phosphoinositide-dependent protein kinase 1">
    <location>
        <begin position="1"/>
        <end position="559"/>
    </location>
</feature>
<feature type="domain" description="Protein kinase" evidence="4">
    <location>
        <begin position="85"/>
        <end position="345"/>
    </location>
</feature>
<feature type="domain" description="PH">
    <location>
        <begin position="462"/>
        <end position="553"/>
    </location>
</feature>
<feature type="region of interest" description="Disordered" evidence="6">
    <location>
        <begin position="25"/>
        <end position="83"/>
    </location>
</feature>
<feature type="region of interest" description="PIF-pocket" evidence="2">
    <location>
        <begin position="116"/>
        <end position="160"/>
    </location>
</feature>
<feature type="compositionally biased region" description="Low complexity" evidence="6">
    <location>
        <begin position="35"/>
        <end position="46"/>
    </location>
</feature>
<feature type="active site" description="Proton acceptor" evidence="4 5">
    <location>
        <position position="208"/>
    </location>
</feature>
<feature type="binding site" evidence="2">
    <location>
        <begin position="95"/>
        <end position="97"/>
    </location>
    <ligand>
        <name>ATP</name>
        <dbReference type="ChEBI" id="CHEBI:30616"/>
    </ligand>
</feature>
<feature type="binding site" evidence="2">
    <location>
        <position position="114"/>
    </location>
    <ligand>
        <name>ATP</name>
        <dbReference type="ChEBI" id="CHEBI:30616"/>
    </ligand>
</feature>
<feature type="binding site" evidence="2">
    <location>
        <begin position="163"/>
        <end position="165"/>
    </location>
    <ligand>
        <name>ATP</name>
        <dbReference type="ChEBI" id="CHEBI:30616"/>
    </ligand>
</feature>
<feature type="binding site" evidence="2">
    <location>
        <position position="169"/>
    </location>
    <ligand>
        <name>ATP</name>
        <dbReference type="ChEBI" id="CHEBI:30616"/>
    </ligand>
</feature>
<feature type="binding site" evidence="2">
    <location>
        <position position="212"/>
    </location>
    <ligand>
        <name>ATP</name>
        <dbReference type="ChEBI" id="CHEBI:30616"/>
    </ligand>
</feature>
<feature type="binding site" evidence="2">
    <location>
        <position position="226"/>
    </location>
    <ligand>
        <name>ATP</name>
        <dbReference type="ChEBI" id="CHEBI:30616"/>
    </ligand>
</feature>
<feature type="modified residue" description="Phosphotyrosine; by SRC and INSR" evidence="2">
    <location>
        <position position="9"/>
    </location>
</feature>
<feature type="modified residue" description="Phosphoserine" evidence="2">
    <location>
        <position position="25"/>
    </location>
</feature>
<feature type="modified residue" description="Phosphoserine" evidence="9">
    <location>
        <position position="244"/>
    </location>
</feature>
<feature type="modified residue" description="N6-acetyllysine" evidence="3">
    <location>
        <position position="307"/>
    </location>
</feature>
<feature type="modified residue" description="Phosphothreonine; by MELK" evidence="2">
    <location>
        <position position="357"/>
    </location>
</feature>
<feature type="modified residue" description="Phosphotyrosine; by SRC and INSR" evidence="2">
    <location>
        <position position="376"/>
    </location>
</feature>
<feature type="modified residue" description="Phosphotyrosine; by SRC and INSR" evidence="2">
    <location>
        <position position="379"/>
    </location>
</feature>
<feature type="modified residue" description="Phosphoserine" evidence="2">
    <location>
        <position position="396"/>
    </location>
</feature>
<feature type="modified residue" description="Phosphoserine; by MAP3K5" evidence="2">
    <location>
        <position position="397"/>
    </location>
</feature>
<feature type="modified residue" description="Phosphoserine" evidence="2">
    <location>
        <position position="399"/>
    </location>
</feature>
<feature type="modified residue" description="Phosphoserine; by MAP3K5" evidence="2">
    <location>
        <position position="401"/>
    </location>
</feature>
<feature type="modified residue" description="Phosphoserine" evidence="2">
    <location>
        <position position="413"/>
    </location>
</feature>
<feature type="modified residue" description="Phosphoserine; by PKC/PRKCQ" evidence="3">
    <location>
        <position position="504"/>
    </location>
</feature>
<feature type="modified residue" description="Phosphothreonine; by autocatalysis" evidence="2">
    <location>
        <position position="516"/>
    </location>
</feature>
<feature type="modified residue" description="Phosphoserine; by PKC/PRKCQ" evidence="3">
    <location>
        <position position="532"/>
    </location>
</feature>
<feature type="sequence conflict" description="In Ref. 1; CAA75758." evidence="8" ref="1">
    <original>S</original>
    <variation>C</variation>
    <location>
        <position position="401"/>
    </location>
</feature>
<name>PDPK1_RAT</name>
<proteinExistence type="evidence at protein level"/>
<dbReference type="EC" id="2.7.11.1"/>
<dbReference type="EMBL" id="Y15748">
    <property type="protein sequence ID" value="CAA75758.1"/>
    <property type="molecule type" value="mRNA"/>
</dbReference>
<dbReference type="EMBL" id="CH473948">
    <property type="protein sequence ID" value="EDM03805.1"/>
    <property type="molecule type" value="Genomic_DNA"/>
</dbReference>
<dbReference type="RefSeq" id="NP_112343.2">
    <property type="nucleotide sequence ID" value="NM_031081.2"/>
</dbReference>
<dbReference type="SMR" id="O55173"/>
<dbReference type="CORUM" id="O55173"/>
<dbReference type="FunCoup" id="O55173">
    <property type="interactions" value="3969"/>
</dbReference>
<dbReference type="STRING" id="10116.ENSRNOP00000061683"/>
<dbReference type="iPTMnet" id="O55173"/>
<dbReference type="PhosphoSitePlus" id="O55173"/>
<dbReference type="jPOST" id="O55173"/>
<dbReference type="PaxDb" id="10116-ENSRNOP00000061683"/>
<dbReference type="Ensembl" id="ENSRNOT00000067660.2">
    <property type="protein sequence ID" value="ENSRNOP00000061683.1"/>
    <property type="gene ID" value="ENSRNOG00000006136.6"/>
</dbReference>
<dbReference type="GeneID" id="81745"/>
<dbReference type="KEGG" id="rno:81745"/>
<dbReference type="UCSC" id="RGD:620307">
    <property type="organism name" value="rat"/>
</dbReference>
<dbReference type="AGR" id="RGD:620307"/>
<dbReference type="CTD" id="5170"/>
<dbReference type="RGD" id="620307">
    <property type="gene designation" value="Pdpk1"/>
</dbReference>
<dbReference type="eggNOG" id="KOG0592">
    <property type="taxonomic scope" value="Eukaryota"/>
</dbReference>
<dbReference type="GeneTree" id="ENSGT00940000155267"/>
<dbReference type="HOGENOM" id="CLU_000288_63_9_1"/>
<dbReference type="InParanoid" id="O55173"/>
<dbReference type="TreeFam" id="TF105423"/>
<dbReference type="BRENDA" id="2.7.11.1">
    <property type="organism ID" value="5301"/>
</dbReference>
<dbReference type="Reactome" id="R-RNO-114604">
    <property type="pathway name" value="GPVI-mediated activation cascade"/>
</dbReference>
<dbReference type="Reactome" id="R-RNO-1257604">
    <property type="pathway name" value="PIP3 activates AKT signaling"/>
</dbReference>
<dbReference type="Reactome" id="R-RNO-165158">
    <property type="pathway name" value="Activation of AKT2"/>
</dbReference>
<dbReference type="Reactome" id="R-RNO-202424">
    <property type="pathway name" value="Downstream TCR signaling"/>
</dbReference>
<dbReference type="Reactome" id="R-RNO-2730905">
    <property type="pathway name" value="Role of LAT2/NTAL/LAB on calcium mobilization"/>
</dbReference>
<dbReference type="Reactome" id="R-RNO-354192">
    <property type="pathway name" value="Integrin signaling"/>
</dbReference>
<dbReference type="Reactome" id="R-RNO-389357">
    <property type="pathway name" value="CD28 dependent PI3K/Akt signaling"/>
</dbReference>
<dbReference type="Reactome" id="R-RNO-392451">
    <property type="pathway name" value="G beta:gamma signalling through PI3Kgamma"/>
</dbReference>
<dbReference type="Reactome" id="R-RNO-5218920">
    <property type="pathway name" value="VEGFR2 mediated vascular permeability"/>
</dbReference>
<dbReference type="Reactome" id="R-RNO-5218921">
    <property type="pathway name" value="VEGFR2 mediated cell proliferation"/>
</dbReference>
<dbReference type="Reactome" id="R-RNO-5625740">
    <property type="pathway name" value="RHO GTPases activate PKNs"/>
</dbReference>
<dbReference type="Reactome" id="R-RNO-6804757">
    <property type="pathway name" value="Regulation of TP53 Degradation"/>
</dbReference>
<dbReference type="Reactome" id="R-RNO-9634635">
    <property type="pathway name" value="Estrogen-stimulated signaling through PRKCZ"/>
</dbReference>
<dbReference type="Reactome" id="R-RNO-9856530">
    <property type="pathway name" value="High laminar flow shear stress activates signaling by PIEZO1 and PECAM1:CDH5:KDR in endothelial cells"/>
</dbReference>
<dbReference type="PRO" id="PR:O55173"/>
<dbReference type="Proteomes" id="UP000002494">
    <property type="component" value="Chromosome 10"/>
</dbReference>
<dbReference type="Proteomes" id="UP000234681">
    <property type="component" value="Chromosome 10"/>
</dbReference>
<dbReference type="Bgee" id="ENSRNOG00000006136">
    <property type="expression patterns" value="Expressed in testis and 19 other cell types or tissues"/>
</dbReference>
<dbReference type="GO" id="GO:0042995">
    <property type="term" value="C:cell projection"/>
    <property type="evidence" value="ECO:0000266"/>
    <property type="project" value="RGD"/>
</dbReference>
<dbReference type="GO" id="GO:0005737">
    <property type="term" value="C:cytoplasm"/>
    <property type="evidence" value="ECO:0000266"/>
    <property type="project" value="RGD"/>
</dbReference>
<dbReference type="GO" id="GO:0031410">
    <property type="term" value="C:cytoplasmic vesicle"/>
    <property type="evidence" value="ECO:0000266"/>
    <property type="project" value="RGD"/>
</dbReference>
<dbReference type="GO" id="GO:0005925">
    <property type="term" value="C:focal adhesion"/>
    <property type="evidence" value="ECO:0007669"/>
    <property type="project" value="UniProtKB-SubCell"/>
</dbReference>
<dbReference type="GO" id="GO:0005634">
    <property type="term" value="C:nucleus"/>
    <property type="evidence" value="ECO:0007669"/>
    <property type="project" value="UniProtKB-SubCell"/>
</dbReference>
<dbReference type="GO" id="GO:0043204">
    <property type="term" value="C:perikaryon"/>
    <property type="evidence" value="ECO:0000314"/>
    <property type="project" value="RGD"/>
</dbReference>
<dbReference type="GO" id="GO:0005886">
    <property type="term" value="C:plasma membrane"/>
    <property type="evidence" value="ECO:0000266"/>
    <property type="project" value="RGD"/>
</dbReference>
<dbReference type="GO" id="GO:0014069">
    <property type="term" value="C:postsynaptic density"/>
    <property type="evidence" value="ECO:0000266"/>
    <property type="project" value="RGD"/>
</dbReference>
<dbReference type="GO" id="GO:0004676">
    <property type="term" value="F:3-phosphoinositide-dependent protein kinase activity"/>
    <property type="evidence" value="ECO:0000314"/>
    <property type="project" value="RGD"/>
</dbReference>
<dbReference type="GO" id="GO:0005524">
    <property type="term" value="F:ATP binding"/>
    <property type="evidence" value="ECO:0007669"/>
    <property type="project" value="UniProtKB-KW"/>
</dbReference>
<dbReference type="GO" id="GO:0005158">
    <property type="term" value="F:insulin receptor binding"/>
    <property type="evidence" value="ECO:0000314"/>
    <property type="project" value="RGD"/>
</dbReference>
<dbReference type="GO" id="GO:0016004">
    <property type="term" value="F:phospholipase activator activity"/>
    <property type="evidence" value="ECO:0000266"/>
    <property type="project" value="RGD"/>
</dbReference>
<dbReference type="GO" id="GO:0043274">
    <property type="term" value="F:phospholipase binding"/>
    <property type="evidence" value="ECO:0000266"/>
    <property type="project" value="RGD"/>
</dbReference>
<dbReference type="GO" id="GO:0019901">
    <property type="term" value="F:protein kinase binding"/>
    <property type="evidence" value="ECO:0000314"/>
    <property type="project" value="RGD"/>
</dbReference>
<dbReference type="GO" id="GO:0106310">
    <property type="term" value="F:protein serine kinase activity"/>
    <property type="evidence" value="ECO:0007669"/>
    <property type="project" value="RHEA"/>
</dbReference>
<dbReference type="GO" id="GO:0004674">
    <property type="term" value="F:protein serine/threonine kinase activity"/>
    <property type="evidence" value="ECO:0000266"/>
    <property type="project" value="RGD"/>
</dbReference>
<dbReference type="GO" id="GO:0019722">
    <property type="term" value="P:calcium-mediated signaling"/>
    <property type="evidence" value="ECO:0000266"/>
    <property type="project" value="RGD"/>
</dbReference>
<dbReference type="GO" id="GO:0016477">
    <property type="term" value="P:cell migration"/>
    <property type="evidence" value="ECO:0000266"/>
    <property type="project" value="RGD"/>
</dbReference>
<dbReference type="GO" id="GO:1990416">
    <property type="term" value="P:cellular response to brain-derived neurotrophic factor stimulus"/>
    <property type="evidence" value="ECO:0000270"/>
    <property type="project" value="RGD"/>
</dbReference>
<dbReference type="GO" id="GO:0071364">
    <property type="term" value="P:cellular response to epidermal growth factor stimulus"/>
    <property type="evidence" value="ECO:0000266"/>
    <property type="project" value="RGD"/>
</dbReference>
<dbReference type="GO" id="GO:0032869">
    <property type="term" value="P:cellular response to insulin stimulus"/>
    <property type="evidence" value="ECO:0000266"/>
    <property type="project" value="RGD"/>
</dbReference>
<dbReference type="GO" id="GO:0007173">
    <property type="term" value="P:epidermal growth factor receptor signaling pathway"/>
    <property type="evidence" value="ECO:0000266"/>
    <property type="project" value="RGD"/>
</dbReference>
<dbReference type="GO" id="GO:0097191">
    <property type="term" value="P:extrinsic apoptotic signaling pathway"/>
    <property type="evidence" value="ECO:0000266"/>
    <property type="project" value="RGD"/>
</dbReference>
<dbReference type="GO" id="GO:0048041">
    <property type="term" value="P:focal adhesion assembly"/>
    <property type="evidence" value="ECO:0000315"/>
    <property type="project" value="RGD"/>
</dbReference>
<dbReference type="GO" id="GO:0006972">
    <property type="term" value="P:hyperosmotic response"/>
    <property type="evidence" value="ECO:0000266"/>
    <property type="project" value="RGD"/>
</dbReference>
<dbReference type="GO" id="GO:0008286">
    <property type="term" value="P:insulin receptor signaling pathway"/>
    <property type="evidence" value="ECO:0000266"/>
    <property type="project" value="RGD"/>
</dbReference>
<dbReference type="GO" id="GO:0048009">
    <property type="term" value="P:insulin-like growth factor receptor signaling pathway"/>
    <property type="evidence" value="ECO:0000266"/>
    <property type="project" value="RGD"/>
</dbReference>
<dbReference type="GO" id="GO:0035556">
    <property type="term" value="P:intracellular signal transduction"/>
    <property type="evidence" value="ECO:0000266"/>
    <property type="project" value="RGD"/>
</dbReference>
<dbReference type="GO" id="GO:0010667">
    <property type="term" value="P:negative regulation of cardiac muscle cell apoptotic process"/>
    <property type="evidence" value="ECO:0000266"/>
    <property type="project" value="RGD"/>
</dbReference>
<dbReference type="GO" id="GO:2000352">
    <property type="term" value="P:negative regulation of endothelial cell apoptotic process"/>
    <property type="evidence" value="ECO:0000266"/>
    <property type="project" value="RGD"/>
</dbReference>
<dbReference type="GO" id="GO:0043524">
    <property type="term" value="P:negative regulation of neuron apoptotic process"/>
    <property type="evidence" value="ECO:0000315"/>
    <property type="project" value="RGD"/>
</dbReference>
<dbReference type="GO" id="GO:0034122">
    <property type="term" value="P:negative regulation of toll-like receptor signaling pathway"/>
    <property type="evidence" value="ECO:0000266"/>
    <property type="project" value="RGD"/>
</dbReference>
<dbReference type="GO" id="GO:0030512">
    <property type="term" value="P:negative regulation of transforming growth factor beta receptor signaling pathway"/>
    <property type="evidence" value="ECO:0000266"/>
    <property type="project" value="RGD"/>
</dbReference>
<dbReference type="GO" id="GO:0043491">
    <property type="term" value="P:phosphatidylinositol 3-kinase/protein kinase B signal transduction"/>
    <property type="evidence" value="ECO:0000266"/>
    <property type="project" value="RGD"/>
</dbReference>
<dbReference type="GO" id="GO:0045766">
    <property type="term" value="P:positive regulation of angiogenesis"/>
    <property type="evidence" value="ECO:0000266"/>
    <property type="project" value="RGD"/>
</dbReference>
<dbReference type="GO" id="GO:0043536">
    <property type="term" value="P:positive regulation of blood vessel endothelial cell migration"/>
    <property type="evidence" value="ECO:0000266"/>
    <property type="project" value="RGD"/>
</dbReference>
<dbReference type="GO" id="GO:0051897">
    <property type="term" value="P:positive regulation of phosphatidylinositol 3-kinase/protein kinase B signal transduction"/>
    <property type="evidence" value="ECO:0000266"/>
    <property type="project" value="RGD"/>
</dbReference>
<dbReference type="GO" id="GO:1903078">
    <property type="term" value="P:positive regulation of protein localization to plasma membrane"/>
    <property type="evidence" value="ECO:0000266"/>
    <property type="project" value="RGD"/>
</dbReference>
<dbReference type="GO" id="GO:0051281">
    <property type="term" value="P:positive regulation of release of sequestered calcium ion into cytosol"/>
    <property type="evidence" value="ECO:0000266"/>
    <property type="project" value="RGD"/>
</dbReference>
<dbReference type="GO" id="GO:1903672">
    <property type="term" value="P:positive regulation of sprouting angiogenesis"/>
    <property type="evidence" value="ECO:0000266"/>
    <property type="project" value="RGD"/>
</dbReference>
<dbReference type="GO" id="GO:1905564">
    <property type="term" value="P:positive regulation of vascular endothelial cell proliferation"/>
    <property type="evidence" value="ECO:0000266"/>
    <property type="project" value="RGD"/>
</dbReference>
<dbReference type="GO" id="GO:0043122">
    <property type="term" value="P:regulation of canonical NF-kappaB signal transduction"/>
    <property type="evidence" value="ECO:0000266"/>
    <property type="project" value="RGD"/>
</dbReference>
<dbReference type="GO" id="GO:0010594">
    <property type="term" value="P:regulation of endothelial cell migration"/>
    <property type="evidence" value="ECO:0000266"/>
    <property type="project" value="RGD"/>
</dbReference>
<dbReference type="GO" id="GO:0043304">
    <property type="term" value="P:regulation of mast cell degranulation"/>
    <property type="evidence" value="ECO:0000266"/>
    <property type="project" value="RGD"/>
</dbReference>
<dbReference type="GO" id="GO:0003323">
    <property type="term" value="P:type B pancreatic cell development"/>
    <property type="evidence" value="ECO:0000266"/>
    <property type="project" value="RGD"/>
</dbReference>
<dbReference type="CDD" id="cd01262">
    <property type="entry name" value="PH_PDK1"/>
    <property type="match status" value="1"/>
</dbReference>
<dbReference type="CDD" id="cd05581">
    <property type="entry name" value="STKc_PDK1"/>
    <property type="match status" value="1"/>
</dbReference>
<dbReference type="FunFam" id="2.30.29.30:FF:000126">
    <property type="entry name" value="3-phosphoinositide dependent protein kinase 1"/>
    <property type="match status" value="1"/>
</dbReference>
<dbReference type="FunFam" id="1.10.510.10:FF:000163">
    <property type="entry name" value="3-phosphoinositide-dependent protein kinase 1"/>
    <property type="match status" value="1"/>
</dbReference>
<dbReference type="FunFam" id="3.30.200.20:FF:000257">
    <property type="entry name" value="3-phosphoinositide-dependent protein kinase 1"/>
    <property type="match status" value="1"/>
</dbReference>
<dbReference type="Gene3D" id="3.30.200.20">
    <property type="entry name" value="Phosphorylase Kinase, domain 1"/>
    <property type="match status" value="1"/>
</dbReference>
<dbReference type="Gene3D" id="2.30.29.30">
    <property type="entry name" value="Pleckstrin-homology domain (PH domain)/Phosphotyrosine-binding domain (PTB)"/>
    <property type="match status" value="1"/>
</dbReference>
<dbReference type="Gene3D" id="1.10.510.10">
    <property type="entry name" value="Transferase(Phosphotransferase) domain 1"/>
    <property type="match status" value="1"/>
</dbReference>
<dbReference type="InterPro" id="IPR011009">
    <property type="entry name" value="Kinase-like_dom_sf"/>
</dbReference>
<dbReference type="InterPro" id="IPR033931">
    <property type="entry name" value="PDK1-typ_PH"/>
</dbReference>
<dbReference type="InterPro" id="IPR039046">
    <property type="entry name" value="PDPK1"/>
</dbReference>
<dbReference type="InterPro" id="IPR011993">
    <property type="entry name" value="PH-like_dom_sf"/>
</dbReference>
<dbReference type="InterPro" id="IPR000719">
    <property type="entry name" value="Prot_kinase_dom"/>
</dbReference>
<dbReference type="InterPro" id="IPR017441">
    <property type="entry name" value="Protein_kinase_ATP_BS"/>
</dbReference>
<dbReference type="InterPro" id="IPR008271">
    <property type="entry name" value="Ser/Thr_kinase_AS"/>
</dbReference>
<dbReference type="InterPro" id="IPR050236">
    <property type="entry name" value="Ser_Thr_kinase_AGC"/>
</dbReference>
<dbReference type="PANTHER" id="PTHR24356:SF163">
    <property type="entry name" value="3-PHOSPHOINOSITIDE-DEPENDENT PROTEIN KINASE 1-RELATED"/>
    <property type="match status" value="1"/>
</dbReference>
<dbReference type="PANTHER" id="PTHR24356">
    <property type="entry name" value="SERINE/THREONINE-PROTEIN KINASE"/>
    <property type="match status" value="1"/>
</dbReference>
<dbReference type="Pfam" id="PF14593">
    <property type="entry name" value="PH_3"/>
    <property type="match status" value="1"/>
</dbReference>
<dbReference type="Pfam" id="PF00069">
    <property type="entry name" value="Pkinase"/>
    <property type="match status" value="1"/>
</dbReference>
<dbReference type="SMART" id="SM00220">
    <property type="entry name" value="S_TKc"/>
    <property type="match status" value="1"/>
</dbReference>
<dbReference type="SUPFAM" id="SSF50729">
    <property type="entry name" value="PH domain-like"/>
    <property type="match status" value="1"/>
</dbReference>
<dbReference type="SUPFAM" id="SSF56112">
    <property type="entry name" value="Protein kinase-like (PK-like)"/>
    <property type="match status" value="1"/>
</dbReference>
<dbReference type="PROSITE" id="PS00107">
    <property type="entry name" value="PROTEIN_KINASE_ATP"/>
    <property type="match status" value="1"/>
</dbReference>
<dbReference type="PROSITE" id="PS50011">
    <property type="entry name" value="PROTEIN_KINASE_DOM"/>
    <property type="match status" value="1"/>
</dbReference>
<dbReference type="PROSITE" id="PS00108">
    <property type="entry name" value="PROTEIN_KINASE_ST"/>
    <property type="match status" value="1"/>
</dbReference>
<keyword id="KW-0007">Acetylation</keyword>
<keyword id="KW-0067">ATP-binding</keyword>
<keyword id="KW-0965">Cell junction</keyword>
<keyword id="KW-1003">Cell membrane</keyword>
<keyword id="KW-0963">Cytoplasm</keyword>
<keyword id="KW-0418">Kinase</keyword>
<keyword id="KW-0472">Membrane</keyword>
<keyword id="KW-0547">Nucleotide-binding</keyword>
<keyword id="KW-0539">Nucleus</keyword>
<keyword id="KW-0597">Phosphoprotein</keyword>
<keyword id="KW-1185">Reference proteome</keyword>
<keyword id="KW-0723">Serine/threonine-protein kinase</keyword>
<keyword id="KW-0804">Transcription</keyword>
<keyword id="KW-0805">Transcription regulation</keyword>
<keyword id="KW-0808">Transferase</keyword>
<keyword id="KW-0832">Ubl conjugation</keyword>
<accession>O55173</accession>
<accession>G3V9W3</accession>
<evidence type="ECO:0000250" key="1"/>
<evidence type="ECO:0000250" key="2">
    <source>
        <dbReference type="UniProtKB" id="O15530"/>
    </source>
</evidence>
<evidence type="ECO:0000250" key="3">
    <source>
        <dbReference type="UniProtKB" id="Q9Z2A0"/>
    </source>
</evidence>
<evidence type="ECO:0000255" key="4">
    <source>
        <dbReference type="PROSITE-ProRule" id="PRU00159"/>
    </source>
</evidence>
<evidence type="ECO:0000255" key="5">
    <source>
        <dbReference type="PROSITE-ProRule" id="PRU10027"/>
    </source>
</evidence>
<evidence type="ECO:0000256" key="6">
    <source>
        <dbReference type="SAM" id="MobiDB-lite"/>
    </source>
</evidence>
<evidence type="ECO:0000269" key="7">
    <source>
    </source>
</evidence>
<evidence type="ECO:0000305" key="8"/>
<evidence type="ECO:0007744" key="9">
    <source>
    </source>
</evidence>
<comment type="function">
    <text evidence="2 3 7">Serine/threonine kinase which acts as a master kinase, phosphorylating and activating a subgroup of the AGC family of protein kinases (By similarity). Its targets include: protein kinase B (PKB/AKT1, PKB/AKT2, PKB/AKT3), p70 ribosomal protein S6 kinase (RPS6KB1), p90 ribosomal protein S6 kinase (RPS6KA1, RPS6KA2 and RPS6KA3), cyclic AMP-dependent protein kinase (PRKACA), protein kinase C (PRKCD and PRKCZ), serum and glucocorticoid-inducible kinase (SGK1, SGK2 and SGK3), p21-activated kinase-1 (PAK1), TSSK3, protein kinase PKN (PKN1 and PKN2) (PubMed:11781095). Plays a central role in the transduction of signals from insulin by providing the activating phosphorylation to PKB/AKT1, thus propagating the signal to downstream targets controlling cell proliferation and survival, as well as glucose and amino acid uptake and storage (By similarity). Negatively regulates the TGF-beta-induced signaling by: modulating the association of SMAD3 and SMAD7 with TGF-beta receptor, phosphorylating SMAD2, SMAD3, SMAD4 and SMAD7, preventing the nuclear translocation of SMAD3 and SMAD4 and the translocation of SMAD7 from the nucleus to the cytoplasm in response to TGF-beta (By similarity). Activates PPARG transcriptional activity and promotes adipocyte differentiation (By similarity). Activates the NF-kappa-B pathway via phosphorylation of IKKB (By similarity). The tyrosine phosphorylated form is crucial for the regulation of focal adhesions by angiotensin II (By similarity). Controls proliferation, survival, and growth of developing pancreatic cells (By similarity). Participates in the regulation of Ca(2+) entry and Ca(2+)-activated K(+) channels of mast cells (By similarity). Essential for the motility of vascular endothelial cells (ECs) and is involved in the regulation of their chemotaxis (By similarity). Plays a critical role in cardiac homeostasis by serving as a dual effector for cell survival and beta-adrenergic response (By similarity). Plays an important role during thymocyte development by regulating the expression of key nutrient receptors on the surface of pre-T cells and mediating Notch-induced cell growth and proliferative responses (By similarity). Provides negative feedback inhibition to toll-like receptor-mediated NF-kappa-B activation in macrophages (By similarity).</text>
</comment>
<comment type="catalytic activity">
    <reaction>
        <text>L-seryl-[protein] + ATP = O-phospho-L-seryl-[protein] + ADP + H(+)</text>
        <dbReference type="Rhea" id="RHEA:17989"/>
        <dbReference type="Rhea" id="RHEA-COMP:9863"/>
        <dbReference type="Rhea" id="RHEA-COMP:11604"/>
        <dbReference type="ChEBI" id="CHEBI:15378"/>
        <dbReference type="ChEBI" id="CHEBI:29999"/>
        <dbReference type="ChEBI" id="CHEBI:30616"/>
        <dbReference type="ChEBI" id="CHEBI:83421"/>
        <dbReference type="ChEBI" id="CHEBI:456216"/>
        <dbReference type="EC" id="2.7.11.1"/>
    </reaction>
</comment>
<comment type="catalytic activity">
    <reaction>
        <text>L-threonyl-[protein] + ATP = O-phospho-L-threonyl-[protein] + ADP + H(+)</text>
        <dbReference type="Rhea" id="RHEA:46608"/>
        <dbReference type="Rhea" id="RHEA-COMP:11060"/>
        <dbReference type="Rhea" id="RHEA-COMP:11605"/>
        <dbReference type="ChEBI" id="CHEBI:15378"/>
        <dbReference type="ChEBI" id="CHEBI:30013"/>
        <dbReference type="ChEBI" id="CHEBI:30616"/>
        <dbReference type="ChEBI" id="CHEBI:61977"/>
        <dbReference type="ChEBI" id="CHEBI:456216"/>
        <dbReference type="EC" id="2.7.11.1"/>
    </reaction>
</comment>
<comment type="activity regulation">
    <text evidence="1">Homodimerization regulates its activity by maintaining the kinase in an autoinhibitory conformation. NPRL2 down-regulates its activity by interfering with tyrosine phosphorylation at the Tyr-9, Tyr-376 and Tyr-379 residues. The 14-3-3 protein YWHAQ acts as a negative regulator by association with the residues surrounding the Ser-244 residue. STRAP positively regulates its activity by enhancing its autophosphorylation and by stimulating its dissociation from YWHAQ. SMAD2, SMAD3, SMAD4 and SMAD7 also positively regulate its activity by stimulating its dissociation from YWHAQ. Activated by phosphorylation on Tyr-9, Tyr-376 and Tyr-379 by INSR in response to insulin (By similarity).</text>
</comment>
<comment type="subunit">
    <text evidence="1 7">Homodimer in its autoinhibited state. Active as monomer. Interacts with NPRL2, PPARG, PAK1, PTK2B, GRB14, PKN1 (via C-terminus), STRAP and IKKB. The Tyr-9 phosphorylated form interacts with SRC, RASA1 and CRK (via their SH2 domains). Interacts with SGK3 in a phosphorylation-dependent manner. The tyrosine-phosphorylated form interacts with PTPN6. The Ser-244 phosphorylated form interacts with YWHAH and YWHAQ. Binds INSR in response to insulin. Interacts (via PH domain) with SMAD3, SMAD4 and SMAD7 (By similarity). Interacts with PKN2; the interaction stimulates PDPK1 autophosphorylation, its PI(3,4,5)P3-dependent kinase activity toward 'Ser-473' of AKT1 but also activates its kinase activity toward PRKCD and PRKCZ.</text>
</comment>
<comment type="subcellular location">
    <subcellularLocation>
        <location evidence="1">Cytoplasm</location>
    </subcellularLocation>
    <subcellularLocation>
        <location evidence="1">Nucleus</location>
    </subcellularLocation>
    <subcellularLocation>
        <location evidence="1">Cell membrane</location>
        <topology evidence="1">Peripheral membrane protein</topology>
    </subcellularLocation>
    <subcellularLocation>
        <location evidence="1">Cell junction</location>
        <location evidence="1">Focal adhesion</location>
    </subcellularLocation>
    <text evidence="1">Tyrosine phosphorylation seems to occur only at the cell membrane. Translocates to the cell membrane following insulin stimulation by a mechanism that involves binding to GRB14 and INSR. SRC and HSP90 promote its localization to the cell membrane. Its nuclear localization is dependent on its association with PTPN6 and its phosphorylation at Ser-396. Restricted to the nucleus in neuronal cells while in non-neuronal cells it is found in the cytoplasm. The Ser-244 phosphorylated form is distributed along the perinuclear region in neuronal cells while in non-neuronal cells it is found in both the nucleus and the cytoplasm. IGF1 transiently increases phosphorylation at Ser-244 of neuronal PDPK1, resulting in its translocation to other cellular compartments. The tyrosine-phosphorylated form colocalizes with PTK2B in focal adhesions after angiotensin II stimulation (By similarity).</text>
</comment>
<comment type="domain">
    <text evidence="1">The PH domain plays a pivotal role in the localization and nuclear import of PDPK1 and is also essential for its homodimerization.</text>
</comment>
<comment type="domain">
    <text evidence="2">The PIF-pocket is a small lobe in the catalytic domain required by the enzyme for the binding to the hydrophobic motif of its substrates. It is an allosteric regulatory site that can accommodate small compounds acting as allosteric inhibitors.</text>
</comment>
<comment type="PTM">
    <text evidence="1">Phosphorylation on Ser-244 in the activation loop is required for full activity. PDPK1 itself can autophosphorylate Ser-244, leading to its own activation. Autophosphorylation is inhibited by the apoptotic C-terminus cleavage product of PKN2. Tyr-9 phosphorylation is critical for stabilization of both PDPK1 and the PDPK1/SRC complex via HSP90-mediated protection of PDPK1 degradation. Angiotensin II stimulates the tyrosine phosphorylation of PDPK1 in vascular smooth muscle in a calcium- and SRC-dependent manner. Phosphorylated on Tyr-9, Tyr-376 and Tyr-379 by INSR in response to insulin. Palmitate negatively regulates autophosphorylation at Ser-244 and palmitate-induced phosphorylation at Ser-532 and Ser-504 by PKC/PRKCQ negatively regulates its ability to phosphorylate PKB/AKT1. Phosphorylation at Thr-357 by MELK partially inhibits kinase activity, the inhibition is cooperatively enhanced by phosphorylation at Ser-397 and Ser-401 by MAP3K5 (By similarity).</text>
</comment>
<comment type="PTM">
    <text evidence="1">Monoubiquitinated in the kinase domain, deubiquitinated by USP4.</text>
</comment>
<comment type="similarity">
    <text evidence="8">Belongs to the protein kinase superfamily. AGC Ser/Thr protein kinase family. PDPK1 subfamily.</text>
</comment>
<organism>
    <name type="scientific">Rattus norvegicus</name>
    <name type="common">Rat</name>
    <dbReference type="NCBI Taxonomy" id="10116"/>
    <lineage>
        <taxon>Eukaryota</taxon>
        <taxon>Metazoa</taxon>
        <taxon>Chordata</taxon>
        <taxon>Craniata</taxon>
        <taxon>Vertebrata</taxon>
        <taxon>Euteleostomi</taxon>
        <taxon>Mammalia</taxon>
        <taxon>Eutheria</taxon>
        <taxon>Euarchontoglires</taxon>
        <taxon>Glires</taxon>
        <taxon>Rodentia</taxon>
        <taxon>Myomorpha</taxon>
        <taxon>Muroidea</taxon>
        <taxon>Muridae</taxon>
        <taxon>Murinae</taxon>
        <taxon>Rattus</taxon>
    </lineage>
</organism>
<reference key="1">
    <citation type="journal article" date="1998" name="Science">
        <title>Protein kinase B kinases that mediate phosphatidylinositol 3,4,5-trisphosphate-dependent activation of protein kinase B.</title>
        <authorList>
            <person name="Stephens L.R."/>
            <person name="Anderson K.E."/>
            <person name="Stokoe D."/>
            <person name="Erdjument-Bromage H."/>
            <person name="Painter G.F."/>
            <person name="Holmes A.B."/>
            <person name="Gaffney P.R.J."/>
            <person name="Reese C.B."/>
            <person name="McCormick F."/>
            <person name="Tempst P."/>
            <person name="Coadwell W.J."/>
            <person name="Hawkins P.T."/>
        </authorList>
    </citation>
    <scope>NUCLEOTIDE SEQUENCE [MRNA]</scope>
    <source>
        <tissue>Brain</tissue>
    </source>
</reference>
<reference key="2">
    <citation type="journal article" date="2004" name="Nature">
        <title>Genome sequence of the Brown Norway rat yields insights into mammalian evolution.</title>
        <authorList>
            <person name="Gibbs R.A."/>
            <person name="Weinstock G.M."/>
            <person name="Metzker M.L."/>
            <person name="Muzny D.M."/>
            <person name="Sodergren E.J."/>
            <person name="Scherer S."/>
            <person name="Scott G."/>
            <person name="Steffen D."/>
            <person name="Worley K.C."/>
            <person name="Burch P.E."/>
            <person name="Okwuonu G."/>
            <person name="Hines S."/>
            <person name="Lewis L."/>
            <person name="Deramo C."/>
            <person name="Delgado O."/>
            <person name="Dugan-Rocha S."/>
            <person name="Miner G."/>
            <person name="Morgan M."/>
            <person name="Hawes A."/>
            <person name="Gill R."/>
            <person name="Holt R.A."/>
            <person name="Adams M.D."/>
            <person name="Amanatides P.G."/>
            <person name="Baden-Tillson H."/>
            <person name="Barnstead M."/>
            <person name="Chin S."/>
            <person name="Evans C.A."/>
            <person name="Ferriera S."/>
            <person name="Fosler C."/>
            <person name="Glodek A."/>
            <person name="Gu Z."/>
            <person name="Jennings D."/>
            <person name="Kraft C.L."/>
            <person name="Nguyen T."/>
            <person name="Pfannkoch C.M."/>
            <person name="Sitter C."/>
            <person name="Sutton G.G."/>
            <person name="Venter J.C."/>
            <person name="Woodage T."/>
            <person name="Smith D."/>
            <person name="Lee H.-M."/>
            <person name="Gustafson E."/>
            <person name="Cahill P."/>
            <person name="Kana A."/>
            <person name="Doucette-Stamm L."/>
            <person name="Weinstock K."/>
            <person name="Fechtel K."/>
            <person name="Weiss R.B."/>
            <person name="Dunn D.M."/>
            <person name="Green E.D."/>
            <person name="Blakesley R.W."/>
            <person name="Bouffard G.G."/>
            <person name="De Jong P.J."/>
            <person name="Osoegawa K."/>
            <person name="Zhu B."/>
            <person name="Marra M."/>
            <person name="Schein J."/>
            <person name="Bosdet I."/>
            <person name="Fjell C."/>
            <person name="Jones S."/>
            <person name="Krzywinski M."/>
            <person name="Mathewson C."/>
            <person name="Siddiqui A."/>
            <person name="Wye N."/>
            <person name="McPherson J."/>
            <person name="Zhao S."/>
            <person name="Fraser C.M."/>
            <person name="Shetty J."/>
            <person name="Shatsman S."/>
            <person name="Geer K."/>
            <person name="Chen Y."/>
            <person name="Abramzon S."/>
            <person name="Nierman W.C."/>
            <person name="Havlak P.H."/>
            <person name="Chen R."/>
            <person name="Durbin K.J."/>
            <person name="Egan A."/>
            <person name="Ren Y."/>
            <person name="Song X.-Z."/>
            <person name="Li B."/>
            <person name="Liu Y."/>
            <person name="Qin X."/>
            <person name="Cawley S."/>
            <person name="Cooney A.J."/>
            <person name="D'Souza L.M."/>
            <person name="Martin K."/>
            <person name="Wu J.Q."/>
            <person name="Gonzalez-Garay M.L."/>
            <person name="Jackson A.R."/>
            <person name="Kalafus K.J."/>
            <person name="McLeod M.P."/>
            <person name="Milosavljevic A."/>
            <person name="Virk D."/>
            <person name="Volkov A."/>
            <person name="Wheeler D.A."/>
            <person name="Zhang Z."/>
            <person name="Bailey J.A."/>
            <person name="Eichler E.E."/>
            <person name="Tuzun E."/>
            <person name="Birney E."/>
            <person name="Mongin E."/>
            <person name="Ureta-Vidal A."/>
            <person name="Woodwark C."/>
            <person name="Zdobnov E."/>
            <person name="Bork P."/>
            <person name="Suyama M."/>
            <person name="Torrents D."/>
            <person name="Alexandersson M."/>
            <person name="Trask B.J."/>
            <person name="Young J.M."/>
            <person name="Huang H."/>
            <person name="Wang H."/>
            <person name="Xing H."/>
            <person name="Daniels S."/>
            <person name="Gietzen D."/>
            <person name="Schmidt J."/>
            <person name="Stevens K."/>
            <person name="Vitt U."/>
            <person name="Wingrove J."/>
            <person name="Camara F."/>
            <person name="Mar Alba M."/>
            <person name="Abril J.F."/>
            <person name="Guigo R."/>
            <person name="Smit A."/>
            <person name="Dubchak I."/>
            <person name="Rubin E.M."/>
            <person name="Couronne O."/>
            <person name="Poliakov A."/>
            <person name="Huebner N."/>
            <person name="Ganten D."/>
            <person name="Goesele C."/>
            <person name="Hummel O."/>
            <person name="Kreitler T."/>
            <person name="Lee Y.-A."/>
            <person name="Monti J."/>
            <person name="Schulz H."/>
            <person name="Zimdahl H."/>
            <person name="Himmelbauer H."/>
            <person name="Lehrach H."/>
            <person name="Jacob H.J."/>
            <person name="Bromberg S."/>
            <person name="Gullings-Handley J."/>
            <person name="Jensen-Seaman M.I."/>
            <person name="Kwitek A.E."/>
            <person name="Lazar J."/>
            <person name="Pasko D."/>
            <person name="Tonellato P.J."/>
            <person name="Twigger S."/>
            <person name="Ponting C.P."/>
            <person name="Duarte J.M."/>
            <person name="Rice S."/>
            <person name="Goodstadt L."/>
            <person name="Beatson S.A."/>
            <person name="Emes R.D."/>
            <person name="Winter E.E."/>
            <person name="Webber C."/>
            <person name="Brandt P."/>
            <person name="Nyakatura G."/>
            <person name="Adetobi M."/>
            <person name="Chiaromonte F."/>
            <person name="Elnitski L."/>
            <person name="Eswara P."/>
            <person name="Hardison R.C."/>
            <person name="Hou M."/>
            <person name="Kolbe D."/>
            <person name="Makova K."/>
            <person name="Miller W."/>
            <person name="Nekrutenko A."/>
            <person name="Riemer C."/>
            <person name="Schwartz S."/>
            <person name="Taylor J."/>
            <person name="Yang S."/>
            <person name="Zhang Y."/>
            <person name="Lindpaintner K."/>
            <person name="Andrews T.D."/>
            <person name="Caccamo M."/>
            <person name="Clamp M."/>
            <person name="Clarke L."/>
            <person name="Curwen V."/>
            <person name="Durbin R.M."/>
            <person name="Eyras E."/>
            <person name="Searle S.M."/>
            <person name="Cooper G.M."/>
            <person name="Batzoglou S."/>
            <person name="Brudno M."/>
            <person name="Sidow A."/>
            <person name="Stone E.A."/>
            <person name="Payseur B.A."/>
            <person name="Bourque G."/>
            <person name="Lopez-Otin C."/>
            <person name="Puente X.S."/>
            <person name="Chakrabarti K."/>
            <person name="Chatterji S."/>
            <person name="Dewey C."/>
            <person name="Pachter L."/>
            <person name="Bray N."/>
            <person name="Yap V.B."/>
            <person name="Caspi A."/>
            <person name="Tesler G."/>
            <person name="Pevzner P.A."/>
            <person name="Haussler D."/>
            <person name="Roskin K.M."/>
            <person name="Baertsch R."/>
            <person name="Clawson H."/>
            <person name="Furey T.S."/>
            <person name="Hinrichs A.S."/>
            <person name="Karolchik D."/>
            <person name="Kent W.J."/>
            <person name="Rosenbloom K.R."/>
            <person name="Trumbower H."/>
            <person name="Weirauch M."/>
            <person name="Cooper D.N."/>
            <person name="Stenson P.D."/>
            <person name="Ma B."/>
            <person name="Brent M."/>
            <person name="Arumugam M."/>
            <person name="Shteynberg D."/>
            <person name="Copley R.R."/>
            <person name="Taylor M.S."/>
            <person name="Riethman H."/>
            <person name="Mudunuri U."/>
            <person name="Peterson J."/>
            <person name="Guyer M."/>
            <person name="Felsenfeld A."/>
            <person name="Old S."/>
            <person name="Mockrin S."/>
            <person name="Collins F.S."/>
        </authorList>
    </citation>
    <scope>NUCLEOTIDE SEQUENCE [LARGE SCALE GENOMIC DNA]</scope>
    <source>
        <strain>Brown Norway</strain>
    </source>
</reference>
<reference key="3">
    <citation type="journal article" date="2005" name="Genome Res.">
        <title>Gene and alternative splicing annotation with AIR.</title>
        <authorList>
            <person name="Florea L."/>
            <person name="Di Francesco V."/>
            <person name="Miller J."/>
            <person name="Turner R."/>
            <person name="Yao A."/>
            <person name="Harris M."/>
            <person name="Walenz B."/>
            <person name="Mobarry C."/>
            <person name="Merkulov G.V."/>
            <person name="Charlab R."/>
            <person name="Dew I."/>
            <person name="Deng Z."/>
            <person name="Istrail S."/>
            <person name="Li P."/>
            <person name="Sutton G."/>
        </authorList>
    </citation>
    <scope>NUCLEOTIDE SEQUENCE [LARGE SCALE GENOMIC DNA]</scope>
    <source>
        <strain>Brown Norway</strain>
    </source>
</reference>
<reference key="4">
    <citation type="journal article" date="2002" name="Biochemistry">
        <title>Regulation of both PDK1 and the phosphorylation of PKC-zeta and -delta by a C-terminal PRK2 fragment.</title>
        <authorList>
            <person name="Hodgkinson C.P."/>
            <person name="Sale G.J."/>
        </authorList>
    </citation>
    <scope>FUNCTION IN PHOSPHORYLATION OF PRKCD AND PRKCZ</scope>
    <scope>AUTOPHOSPHORYLATION</scope>
    <scope>INTERACTION WITH PRKCD AND PRKCZ</scope>
</reference>
<reference key="5">
    <citation type="journal article" date="2012" name="Nat. Commun.">
        <title>Quantitative maps of protein phosphorylation sites across 14 different rat organs and tissues.</title>
        <authorList>
            <person name="Lundby A."/>
            <person name="Secher A."/>
            <person name="Lage K."/>
            <person name="Nordsborg N.B."/>
            <person name="Dmytriyev A."/>
            <person name="Lundby C."/>
            <person name="Olsen J.V."/>
        </authorList>
    </citation>
    <scope>PHOSPHORYLATION [LARGE SCALE ANALYSIS] AT SER-244</scope>
    <scope>IDENTIFICATION BY MASS SPECTROMETRY [LARGE SCALE ANALYSIS]</scope>
</reference>
<gene>
    <name type="primary">Pdpk1</name>
    <name type="synonym">Pdk1</name>
</gene>
<protein>
    <recommendedName>
        <fullName>3-phosphoinositide-dependent protein kinase 1</fullName>
        <ecNumber>2.7.11.1</ecNumber>
    </recommendedName>
    <alternativeName>
        <fullName>Protein kinase B kinase</fullName>
        <shortName>PkB kinase</shortName>
    </alternativeName>
</protein>
<sequence>MARTTSQLYDAVPIQSSVVLCSCPSPSMVRSQTEPSSSPGIPSGVSRQGSTMDGTTAEARPSTNPLQQHPAQLPPQPRKKRPEDFKFGKILGEGSFSTVVLARELATSREYAIKILEKRHIIKENKVPYVTRERDVMSRLDHPFFVKLYFTFQDDEKLYFGLSYAKNGELLKYIRKIGSFDETCTRFYTAEIVSALEYLHGKGIIHRDLKPENILLNEDMHIQITDFGTAKVLSPDSKQARANSFVGTAQYVSPELLTEKSACKSSDLWALGCIIYQLVAGLPPFRAGNEYLIFQKIIKLEYDFPEKFFPKARDLVEKLLVLDATKRLGCEEMEGYGPLKAHPFFESITWENLHQQTPPKLTAYLPAMSEDDEDCYGNYDNLLSQFGCMQVSSSSSSHSLSAVDASLPQRSGSNIEQYIHDLDTNSFELDLQFSEDEKRLLLEKQAGGNPWHQFVENNLILKMGPVDKRKGLFARRRQLLLTEGPHLYYVDPVNKVLKGEIPWSQELRPEAKNFKTFFVHTPNRTYYLMDPSGNAHKWCRKIQEVWRQQYQSSPDAAVQ</sequence>